<gene>
    <name evidence="1" type="primary">hisI</name>
    <name evidence="1" type="synonym">hisIE</name>
    <name type="ordered locus">c2553</name>
</gene>
<reference key="1">
    <citation type="journal article" date="2002" name="Proc. Natl. Acad. Sci. U.S.A.">
        <title>Extensive mosaic structure revealed by the complete genome sequence of uropathogenic Escherichia coli.</title>
        <authorList>
            <person name="Welch R.A."/>
            <person name="Burland V."/>
            <person name="Plunkett G. III"/>
            <person name="Redford P."/>
            <person name="Roesch P."/>
            <person name="Rasko D."/>
            <person name="Buckles E.L."/>
            <person name="Liou S.-R."/>
            <person name="Boutin A."/>
            <person name="Hackett J."/>
            <person name="Stroud D."/>
            <person name="Mayhew G.F."/>
            <person name="Rose D.J."/>
            <person name="Zhou S."/>
            <person name="Schwartz D.C."/>
            <person name="Perna N.T."/>
            <person name="Mobley H.L.T."/>
            <person name="Donnenberg M.S."/>
            <person name="Blattner F.R."/>
        </authorList>
    </citation>
    <scope>NUCLEOTIDE SEQUENCE [LARGE SCALE GENOMIC DNA]</scope>
    <source>
        <strain>CFT073 / ATCC 700928 / UPEC</strain>
    </source>
</reference>
<sequence>MLTEQQRRELDWEKTDGLMPVIVQHAVSGEVLMLGYMNPEALDRTIESGKVTFFSRTKQRLWTKGETSGNFLNVVSIAPDCDNDTLLVLANPIGPTCHKGTSSCFGDTAHQWLFLYQLEQLLAERKSADPETSYTAKLYASGSKRIAQKVGEEGVETALAATVHDRFELTNEASDLMYHLLVLLQDQDLDLTTVIENLRKRHQ</sequence>
<keyword id="KW-0028">Amino-acid biosynthesis</keyword>
<keyword id="KW-0067">ATP-binding</keyword>
<keyword id="KW-0963">Cytoplasm</keyword>
<keyword id="KW-0368">Histidine biosynthesis</keyword>
<keyword id="KW-0378">Hydrolase</keyword>
<keyword id="KW-0511">Multifunctional enzyme</keyword>
<keyword id="KW-0547">Nucleotide-binding</keyword>
<keyword id="KW-1185">Reference proteome</keyword>
<feature type="chain" id="PRO_0000136412" description="Histidine biosynthesis bifunctional protein HisIE">
    <location>
        <begin position="1"/>
        <end position="203"/>
    </location>
</feature>
<feature type="region of interest" description="Phosphoribosyl-AMP cyclohydrolase">
    <location>
        <begin position="1"/>
        <end position="114"/>
    </location>
</feature>
<feature type="region of interest" description="Phosphoribosyl-ATP pyrophosphohydrolase">
    <location>
        <begin position="115"/>
        <end position="203"/>
    </location>
</feature>
<comment type="catalytic activity">
    <reaction evidence="1">
        <text>1-(5-phospho-beta-D-ribosyl)-ATP + H2O = 1-(5-phospho-beta-D-ribosyl)-5'-AMP + diphosphate + H(+)</text>
        <dbReference type="Rhea" id="RHEA:22828"/>
        <dbReference type="ChEBI" id="CHEBI:15377"/>
        <dbReference type="ChEBI" id="CHEBI:15378"/>
        <dbReference type="ChEBI" id="CHEBI:33019"/>
        <dbReference type="ChEBI" id="CHEBI:59457"/>
        <dbReference type="ChEBI" id="CHEBI:73183"/>
        <dbReference type="EC" id="3.6.1.31"/>
    </reaction>
</comment>
<comment type="catalytic activity">
    <reaction evidence="1">
        <text>1-(5-phospho-beta-D-ribosyl)-5'-AMP + H2O = 1-(5-phospho-beta-D-ribosyl)-5-[(5-phospho-beta-D-ribosylamino)methylideneamino]imidazole-4-carboxamide</text>
        <dbReference type="Rhea" id="RHEA:20049"/>
        <dbReference type="ChEBI" id="CHEBI:15377"/>
        <dbReference type="ChEBI" id="CHEBI:58435"/>
        <dbReference type="ChEBI" id="CHEBI:59457"/>
        <dbReference type="EC" id="3.5.4.19"/>
    </reaction>
</comment>
<comment type="pathway">
    <text evidence="1">Amino-acid biosynthesis; L-histidine biosynthesis; L-histidine from 5-phospho-alpha-D-ribose 1-diphosphate: step 2/9.</text>
</comment>
<comment type="pathway">
    <text evidence="1">Amino-acid biosynthesis; L-histidine biosynthesis; L-histidine from 5-phospho-alpha-D-ribose 1-diphosphate: step 3/9.</text>
</comment>
<comment type="subcellular location">
    <subcellularLocation>
        <location evidence="1">Cytoplasm</location>
    </subcellularLocation>
</comment>
<comment type="similarity">
    <text evidence="1">In the N-terminal section; belongs to the PRA-CH family.</text>
</comment>
<comment type="similarity">
    <text evidence="1">In the C-terminal section; belongs to the PRA-PH family.</text>
</comment>
<accession>Q8FG47</accession>
<evidence type="ECO:0000255" key="1">
    <source>
        <dbReference type="HAMAP-Rule" id="MF_01019"/>
    </source>
</evidence>
<proteinExistence type="inferred from homology"/>
<dbReference type="EC" id="3.5.4.19" evidence="1"/>
<dbReference type="EC" id="3.6.1.31" evidence="1"/>
<dbReference type="EMBL" id="AE014075">
    <property type="protein sequence ID" value="AAN81008.1"/>
    <property type="molecule type" value="Genomic_DNA"/>
</dbReference>
<dbReference type="RefSeq" id="WP_000954917.1">
    <property type="nucleotide sequence ID" value="NZ_CP051263.1"/>
</dbReference>
<dbReference type="SMR" id="Q8FG47"/>
<dbReference type="STRING" id="199310.c2553"/>
<dbReference type="KEGG" id="ecc:c2553"/>
<dbReference type="eggNOG" id="COG0139">
    <property type="taxonomic scope" value="Bacteria"/>
</dbReference>
<dbReference type="eggNOG" id="COG0140">
    <property type="taxonomic scope" value="Bacteria"/>
</dbReference>
<dbReference type="HOGENOM" id="CLU_048577_3_1_6"/>
<dbReference type="BioCyc" id="ECOL199310:C2553-MONOMER"/>
<dbReference type="UniPathway" id="UPA00031">
    <property type="reaction ID" value="UER00007"/>
</dbReference>
<dbReference type="UniPathway" id="UPA00031">
    <property type="reaction ID" value="UER00008"/>
</dbReference>
<dbReference type="Proteomes" id="UP000001410">
    <property type="component" value="Chromosome"/>
</dbReference>
<dbReference type="GO" id="GO:0005737">
    <property type="term" value="C:cytoplasm"/>
    <property type="evidence" value="ECO:0007669"/>
    <property type="project" value="UniProtKB-SubCell"/>
</dbReference>
<dbReference type="GO" id="GO:0005524">
    <property type="term" value="F:ATP binding"/>
    <property type="evidence" value="ECO:0007669"/>
    <property type="project" value="UniProtKB-KW"/>
</dbReference>
<dbReference type="GO" id="GO:0004635">
    <property type="term" value="F:phosphoribosyl-AMP cyclohydrolase activity"/>
    <property type="evidence" value="ECO:0007669"/>
    <property type="project" value="UniProtKB-UniRule"/>
</dbReference>
<dbReference type="GO" id="GO:0004636">
    <property type="term" value="F:phosphoribosyl-ATP diphosphatase activity"/>
    <property type="evidence" value="ECO:0007669"/>
    <property type="project" value="UniProtKB-UniRule"/>
</dbReference>
<dbReference type="GO" id="GO:0000105">
    <property type="term" value="P:L-histidine biosynthetic process"/>
    <property type="evidence" value="ECO:0007669"/>
    <property type="project" value="UniProtKB-UniRule"/>
</dbReference>
<dbReference type="CDD" id="cd11534">
    <property type="entry name" value="NTP-PPase_HisIE_like"/>
    <property type="match status" value="1"/>
</dbReference>
<dbReference type="FunFam" id="1.10.287.1080:FF:000002">
    <property type="entry name" value="Histidine biosynthesis bifunctional protein HisIE"/>
    <property type="match status" value="1"/>
</dbReference>
<dbReference type="FunFam" id="3.10.20.810:FF:000001">
    <property type="entry name" value="Histidine biosynthesis bifunctional protein HisIE"/>
    <property type="match status" value="1"/>
</dbReference>
<dbReference type="Gene3D" id="1.10.287.1080">
    <property type="entry name" value="MazG-like"/>
    <property type="match status" value="1"/>
</dbReference>
<dbReference type="Gene3D" id="3.10.20.810">
    <property type="entry name" value="Phosphoribosyl-AMP cyclohydrolase"/>
    <property type="match status" value="1"/>
</dbReference>
<dbReference type="HAMAP" id="MF_01020">
    <property type="entry name" value="HisE"/>
    <property type="match status" value="1"/>
</dbReference>
<dbReference type="HAMAP" id="MF_01019">
    <property type="entry name" value="HisIE"/>
    <property type="match status" value="1"/>
</dbReference>
<dbReference type="InterPro" id="IPR023019">
    <property type="entry name" value="His_synth_HisIE"/>
</dbReference>
<dbReference type="InterPro" id="IPR008179">
    <property type="entry name" value="HisE"/>
</dbReference>
<dbReference type="InterPro" id="IPR021130">
    <property type="entry name" value="PRib-ATP_PPHydrolase-like"/>
</dbReference>
<dbReference type="InterPro" id="IPR002496">
    <property type="entry name" value="PRib_AMP_CycHydrolase_dom"/>
</dbReference>
<dbReference type="InterPro" id="IPR038019">
    <property type="entry name" value="PRib_AMP_CycHydrolase_sf"/>
</dbReference>
<dbReference type="NCBIfam" id="TIGR03188">
    <property type="entry name" value="histidine_hisI"/>
    <property type="match status" value="1"/>
</dbReference>
<dbReference type="NCBIfam" id="NF000768">
    <property type="entry name" value="PRK00051.1"/>
    <property type="match status" value="1"/>
</dbReference>
<dbReference type="NCBIfam" id="NF002747">
    <property type="entry name" value="PRK02759.1"/>
    <property type="match status" value="1"/>
</dbReference>
<dbReference type="PANTHER" id="PTHR42945">
    <property type="entry name" value="HISTIDINE BIOSYNTHESIS BIFUNCTIONAL PROTEIN"/>
    <property type="match status" value="1"/>
</dbReference>
<dbReference type="PANTHER" id="PTHR42945:SF9">
    <property type="entry name" value="HISTIDINE BIOSYNTHESIS BIFUNCTIONAL PROTEIN HISIE"/>
    <property type="match status" value="1"/>
</dbReference>
<dbReference type="Pfam" id="PF01502">
    <property type="entry name" value="PRA-CH"/>
    <property type="match status" value="1"/>
</dbReference>
<dbReference type="Pfam" id="PF01503">
    <property type="entry name" value="PRA-PH"/>
    <property type="match status" value="1"/>
</dbReference>
<dbReference type="SUPFAM" id="SSF101386">
    <property type="entry name" value="all-alpha NTP pyrophosphatases"/>
    <property type="match status" value="1"/>
</dbReference>
<dbReference type="SUPFAM" id="SSF141734">
    <property type="entry name" value="HisI-like"/>
    <property type="match status" value="1"/>
</dbReference>
<name>HIS2_ECOL6</name>
<protein>
    <recommendedName>
        <fullName evidence="1">Histidine biosynthesis bifunctional protein HisIE</fullName>
    </recommendedName>
    <domain>
        <recommendedName>
            <fullName evidence="1">Phosphoribosyl-AMP cyclohydrolase</fullName>
            <shortName evidence="1">PRA-CH</shortName>
            <ecNumber evidence="1">3.5.4.19</ecNumber>
        </recommendedName>
    </domain>
    <domain>
        <recommendedName>
            <fullName evidence="1">Phosphoribosyl-ATP pyrophosphatase</fullName>
            <shortName evidence="1">PRA-PH</shortName>
            <ecNumber evidence="1">3.6.1.31</ecNumber>
        </recommendedName>
    </domain>
</protein>
<organism>
    <name type="scientific">Escherichia coli O6:H1 (strain CFT073 / ATCC 700928 / UPEC)</name>
    <dbReference type="NCBI Taxonomy" id="199310"/>
    <lineage>
        <taxon>Bacteria</taxon>
        <taxon>Pseudomonadati</taxon>
        <taxon>Pseudomonadota</taxon>
        <taxon>Gammaproteobacteria</taxon>
        <taxon>Enterobacterales</taxon>
        <taxon>Enterobacteriaceae</taxon>
        <taxon>Escherichia</taxon>
    </lineage>
</organism>